<comment type="subcellular location">
    <subcellularLocation>
        <location evidence="2">Host membrane</location>
        <topology evidence="2">Multi-pass membrane protein</topology>
    </subcellularLocation>
</comment>
<feature type="chain" id="PRO_0000384572" description="Putative transmembrane protein ORF807">
    <location>
        <begin position="1"/>
        <end position="807"/>
    </location>
</feature>
<feature type="transmembrane region" description="Helical" evidence="1">
    <location>
        <begin position="210"/>
        <end position="230"/>
    </location>
</feature>
<feature type="transmembrane region" description="Helical" evidence="1">
    <location>
        <begin position="234"/>
        <end position="254"/>
    </location>
</feature>
<feature type="transmembrane region" description="Helical" evidence="1">
    <location>
        <begin position="270"/>
        <end position="290"/>
    </location>
</feature>
<feature type="transmembrane region" description="Helical" evidence="1">
    <location>
        <begin position="459"/>
        <end position="479"/>
    </location>
</feature>
<feature type="transmembrane region" description="Helical" evidence="1">
    <location>
        <begin position="657"/>
        <end position="677"/>
    </location>
</feature>
<keyword id="KW-1043">Host membrane</keyword>
<keyword id="KW-0472">Membrane</keyword>
<keyword id="KW-1185">Reference proteome</keyword>
<keyword id="KW-0812">Transmembrane</keyword>
<keyword id="KW-1133">Transmembrane helix</keyword>
<accession>Q70LC2</accession>
<evidence type="ECO:0000255" key="1"/>
<evidence type="ECO:0000305" key="2"/>
<organism>
    <name type="scientific">Acidianus filamentous virus 1 (isolate United States/Yellowstone)</name>
    <name type="common">AFV-1</name>
    <dbReference type="NCBI Taxonomy" id="654909"/>
    <lineage>
        <taxon>Viruses</taxon>
        <taxon>Adnaviria</taxon>
        <taxon>Zilligvirae</taxon>
        <taxon>Taleaviricota</taxon>
        <taxon>Tokiviricetes</taxon>
        <taxon>Ligamenvirales</taxon>
        <taxon>Ungulaviridae</taxon>
        <taxon>Captovirus</taxon>
        <taxon>Acidianus filamentous virus 1</taxon>
    </lineage>
</organism>
<protein>
    <recommendedName>
        <fullName>Putative transmembrane protein ORF807</fullName>
    </recommendedName>
</protein>
<proteinExistence type="predicted"/>
<name>Y807_AFV1Y</name>
<dbReference type="EMBL" id="AJ567472">
    <property type="protein sequence ID" value="CAD98958.1"/>
    <property type="molecule type" value="Genomic_DNA"/>
</dbReference>
<dbReference type="RefSeq" id="YP_003754.1">
    <property type="nucleotide sequence ID" value="NC_005830.1"/>
</dbReference>
<dbReference type="KEGG" id="vg:2769165"/>
<dbReference type="Proteomes" id="UP000000514">
    <property type="component" value="Genome"/>
</dbReference>
<dbReference type="GO" id="GO:0033644">
    <property type="term" value="C:host cell membrane"/>
    <property type="evidence" value="ECO:0007669"/>
    <property type="project" value="UniProtKB-SubCell"/>
</dbReference>
<dbReference type="GO" id="GO:0016020">
    <property type="term" value="C:membrane"/>
    <property type="evidence" value="ECO:0007669"/>
    <property type="project" value="UniProtKB-KW"/>
</dbReference>
<gene>
    <name type="ORF">ORF807</name>
</gene>
<reference key="1">
    <citation type="journal article" date="2003" name="Virology">
        <title>AFV1, a novel virus infecting hyperthermophilic archaea of the genus acidianus.</title>
        <authorList>
            <person name="Bettstetter M."/>
            <person name="Peng X."/>
            <person name="Garrett R.A."/>
            <person name="Prangishvili D."/>
        </authorList>
    </citation>
    <scope>NUCLEOTIDE SEQUENCE [GENOMIC DNA]</scope>
</reference>
<sequence length="807" mass="87090">MSAQQQCDLTSYDAMYYLQTGDLQLAVNLFISPNSSFSYSGNSGQSILQSLGTIIIWVYKVNGQIHIYTIGWQPIYYSLQNGCRANIYFRLWALIQIQGAWLASEIMNMPVTLKNTGGQFVGTFIPLHLLGFAIADFPSLSSGSQGYTHMLMSQTDGSIKLLPSAPGVLPYFITVGFQCRAGAYVLKQPCPNCIFVRLCVPTSNGIPYEVLMLICLLIYAGCYASYSDILGKNGLSTVGAGVNAKVPVTAIVYFDTQQYIQQNVVSQLNVTIQLYALIWVGISTTNFVILPEISQILKMPSGLILNIPVPFQAYPTPTVAIPRILTLITCCGTPYIYNQYFPCSFDKASTVTTECGVPLVAYPTISQMQPIAGSNVAFLLSNQSADFADLLSLNYGLLNLTTQQKVSLANQYSYTMTQCKKEVIRGTYYEECVKNVSSNLNQYSSQPASPQPNIPVDEILIGVGAVALIVIGTVALVLTGGASAPVSAGLDVAGAEALGSLLLDNGALSLSSLQEEGLANTLMQTSVSDSFESEDEEIVQNEPNSAKLVVFTNTNQPFTLTVTGTDITGTVTIQSGIADFDLTITLPSGVSVPISVPAGVIDDFTDDQGYTIYEQEDQPVRLKYSDGQVIYNTISQLGKKLDGFFSLLKKLLKYIAVALLSAIASILVNMFLFMPLVASIMTSIIQSGQGVSSGGTVTVTGQSTSTTLSTALSDIASTFGQIPQILEEIPVALASAYLITDLLTDFFGDLWRGFSKNLLPNKAVNVNIPQPLEVDLKSRLKAYSEAVISKNDKGEWVINKKLRGRFS</sequence>
<organismHost>
    <name type="scientific">Acidianus hospitalis</name>
    <dbReference type="NCBI Taxonomy" id="563177"/>
</organismHost>
<organismHost>
    <name type="scientific">Acidianus infernus</name>
    <dbReference type="NCBI Taxonomy" id="12915"/>
</organismHost>